<proteinExistence type="inferred from homology"/>
<accession>B7LNJ2</accession>
<organism>
    <name type="scientific">Escherichia fergusonii (strain ATCC 35469 / DSM 13698 / CCUG 18766 / IAM 14443 / JCM 21226 / LMG 7866 / NBRC 102419 / NCTC 12128 / CDC 0568-73)</name>
    <dbReference type="NCBI Taxonomy" id="585054"/>
    <lineage>
        <taxon>Bacteria</taxon>
        <taxon>Pseudomonadati</taxon>
        <taxon>Pseudomonadota</taxon>
        <taxon>Gammaproteobacteria</taxon>
        <taxon>Enterobacterales</taxon>
        <taxon>Enterobacteriaceae</taxon>
        <taxon>Escherichia</taxon>
    </lineage>
</organism>
<sequence>MLFGFFRKLCQVLYRVQVTGDPAALKGERVLITPNHVSFIDGILLALFLPVRPVFAVYTSISQQWYMRWLQSLIDFVPLDPTKPMAIKHLVRLVEQGRPVVIFPEGRITVTGSLMKIYDGAGFVAAKSGATVVPVRIEGAELTHFSRLKGLVKRRLFPKIHLHILPPTHVPMPDAPRARDRRKIAGEMLHQIMMEARMAVRPRETLYESLLGAMHRYGGGKNCVEDVNFTPDSYRKLLTKTLFVGRILEKYSAEGERIGLMLPNAGISAAVIFGAIARRRIPAMMNYTAGVKGLTSAITAAEIKTIFTSRQFLDKGKLWHLPEQLTQVRWIYLEDLKADVTLTDKVWIFAHLLMPHLAQVKQQPEEEALILFTSGSEGHPKGVVHSHKSILANVEQIKTIADFTTNDRFMSALPLFHSFGLTVGLFTPLLTGAEVFLYPSPLHYRIVPELVYDRNCTVLFGTSTFLGHYARFANPYDFYRLRYVVAGAEKLQESTKQLWQDKFGLRILEGYGVTECAPVVSINVPMAAKPGTVGRILPGMDARLLAVPGIEDGGRLQLKGPNIMNGYLRVEKPGVLEVPTAENIQGELERGWYDTGDIVRFDEQGFVQIQGRAKRFAKIAGEMVSLEMVEQLALGVSPDKVHATAIKSDASKGEALVLFTTDSELTRDKLQQYAREHGVPELAVPRDIRYLKQMPLLGSGKPDFVTLKSWVDEPEKHNE</sequence>
<name>AAS_ESCF3</name>
<evidence type="ECO:0000255" key="1">
    <source>
        <dbReference type="HAMAP-Rule" id="MF_01162"/>
    </source>
</evidence>
<gene>
    <name evidence="1" type="primary">aas</name>
    <name type="ordered locus">EFER_2770</name>
</gene>
<reference key="1">
    <citation type="journal article" date="2009" name="PLoS Genet.">
        <title>Organised genome dynamics in the Escherichia coli species results in highly diverse adaptive paths.</title>
        <authorList>
            <person name="Touchon M."/>
            <person name="Hoede C."/>
            <person name="Tenaillon O."/>
            <person name="Barbe V."/>
            <person name="Baeriswyl S."/>
            <person name="Bidet P."/>
            <person name="Bingen E."/>
            <person name="Bonacorsi S."/>
            <person name="Bouchier C."/>
            <person name="Bouvet O."/>
            <person name="Calteau A."/>
            <person name="Chiapello H."/>
            <person name="Clermont O."/>
            <person name="Cruveiller S."/>
            <person name="Danchin A."/>
            <person name="Diard M."/>
            <person name="Dossat C."/>
            <person name="Karoui M.E."/>
            <person name="Frapy E."/>
            <person name="Garry L."/>
            <person name="Ghigo J.M."/>
            <person name="Gilles A.M."/>
            <person name="Johnson J."/>
            <person name="Le Bouguenec C."/>
            <person name="Lescat M."/>
            <person name="Mangenot S."/>
            <person name="Martinez-Jehanne V."/>
            <person name="Matic I."/>
            <person name="Nassif X."/>
            <person name="Oztas S."/>
            <person name="Petit M.A."/>
            <person name="Pichon C."/>
            <person name="Rouy Z."/>
            <person name="Ruf C.S."/>
            <person name="Schneider D."/>
            <person name="Tourret J."/>
            <person name="Vacherie B."/>
            <person name="Vallenet D."/>
            <person name="Medigue C."/>
            <person name="Rocha E.P.C."/>
            <person name="Denamur E."/>
        </authorList>
    </citation>
    <scope>NUCLEOTIDE SEQUENCE [LARGE SCALE GENOMIC DNA]</scope>
    <source>
        <strain>ATCC 35469 / DSM 13698 / BCRC 15582 / CCUG 18766 / IAM 14443 / JCM 21226 / LMG 7866 / NBRC 102419 / NCTC 12128 / CDC 0568-73</strain>
    </source>
</reference>
<feature type="chain" id="PRO_1000137893" description="Bifunctional protein Aas">
    <location>
        <begin position="1"/>
        <end position="719"/>
    </location>
</feature>
<feature type="transmembrane region" description="Helical" evidence="1">
    <location>
        <begin position="258"/>
        <end position="277"/>
    </location>
</feature>
<feature type="transmembrane region" description="Helical" evidence="1">
    <location>
        <begin position="409"/>
        <end position="433"/>
    </location>
</feature>
<feature type="region of interest" description="Acyltransferase">
    <location>
        <begin position="15"/>
        <end position="138"/>
    </location>
</feature>
<feature type="region of interest" description="AMP-binding">
    <location>
        <begin position="233"/>
        <end position="646"/>
    </location>
</feature>
<feature type="active site" evidence="1">
    <location>
        <position position="36"/>
    </location>
</feature>
<protein>
    <recommendedName>
        <fullName evidence="1">Bifunctional protein Aas</fullName>
    </recommendedName>
    <domain>
        <recommendedName>
            <fullName evidence="1">2-acylglycerophosphoethanolamine acyltransferase</fullName>
            <ecNumber evidence="1">2.3.1.40</ecNumber>
        </recommendedName>
        <alternativeName>
            <fullName evidence="1">2-acyl-GPE acyltransferase</fullName>
        </alternativeName>
        <alternativeName>
            <fullName evidence="1">Acyl-[acyl-carrier-protein]--phospholipid O-acyltransferase</fullName>
        </alternativeName>
    </domain>
    <domain>
        <recommendedName>
            <fullName evidence="1">Acyl-[acyl-carrier-protein] synthetase</fullName>
            <ecNumber evidence="1">6.2.1.20</ecNumber>
        </recommendedName>
        <alternativeName>
            <fullName evidence="1">Acyl-ACP synthetase</fullName>
        </alternativeName>
        <alternativeName>
            <fullName evidence="1">Long-chain-fatty-acid--[acyl-carrier-protein] ligase</fullName>
        </alternativeName>
    </domain>
</protein>
<keyword id="KW-0012">Acyltransferase</keyword>
<keyword id="KW-0067">ATP-binding</keyword>
<keyword id="KW-0997">Cell inner membrane</keyword>
<keyword id="KW-1003">Cell membrane</keyword>
<keyword id="KW-0436">Ligase</keyword>
<keyword id="KW-0472">Membrane</keyword>
<keyword id="KW-0511">Multifunctional enzyme</keyword>
<keyword id="KW-0547">Nucleotide-binding</keyword>
<keyword id="KW-0808">Transferase</keyword>
<keyword id="KW-0812">Transmembrane</keyword>
<keyword id="KW-1133">Transmembrane helix</keyword>
<dbReference type="EC" id="2.3.1.40" evidence="1"/>
<dbReference type="EC" id="6.2.1.20" evidence="1"/>
<dbReference type="EMBL" id="CU928158">
    <property type="protein sequence ID" value="CAQ90265.1"/>
    <property type="molecule type" value="Genomic_DNA"/>
</dbReference>
<dbReference type="RefSeq" id="WP_000896081.1">
    <property type="nucleotide sequence ID" value="NC_011740.1"/>
</dbReference>
<dbReference type="SMR" id="B7LNJ2"/>
<dbReference type="GeneID" id="75056193"/>
<dbReference type="KEGG" id="efe:EFER_2770"/>
<dbReference type="HOGENOM" id="CLU_000022_59_8_6"/>
<dbReference type="OrthoDB" id="9803968at2"/>
<dbReference type="Proteomes" id="UP000000745">
    <property type="component" value="Chromosome"/>
</dbReference>
<dbReference type="GO" id="GO:0005886">
    <property type="term" value="C:plasma membrane"/>
    <property type="evidence" value="ECO:0007669"/>
    <property type="project" value="UniProtKB-SubCell"/>
</dbReference>
<dbReference type="GO" id="GO:0008779">
    <property type="term" value="F:acyl-[acyl-carrier-protein]-phospholipid O-acyltransferase activity"/>
    <property type="evidence" value="ECO:0007669"/>
    <property type="project" value="UniProtKB-UniRule"/>
</dbReference>
<dbReference type="GO" id="GO:0005524">
    <property type="term" value="F:ATP binding"/>
    <property type="evidence" value="ECO:0007669"/>
    <property type="project" value="UniProtKB-KW"/>
</dbReference>
<dbReference type="GO" id="GO:0008922">
    <property type="term" value="F:long-chain fatty acid [acyl-carrier-protein] ligase activity"/>
    <property type="evidence" value="ECO:0007669"/>
    <property type="project" value="UniProtKB-UniRule"/>
</dbReference>
<dbReference type="GO" id="GO:0031956">
    <property type="term" value="F:medium-chain fatty acid-CoA ligase activity"/>
    <property type="evidence" value="ECO:0007669"/>
    <property type="project" value="TreeGrafter"/>
</dbReference>
<dbReference type="GO" id="GO:0006631">
    <property type="term" value="P:fatty acid metabolic process"/>
    <property type="evidence" value="ECO:0007669"/>
    <property type="project" value="InterPro"/>
</dbReference>
<dbReference type="GO" id="GO:0008654">
    <property type="term" value="P:phospholipid biosynthetic process"/>
    <property type="evidence" value="ECO:0007669"/>
    <property type="project" value="InterPro"/>
</dbReference>
<dbReference type="CDD" id="cd05909">
    <property type="entry name" value="AAS_C"/>
    <property type="match status" value="1"/>
</dbReference>
<dbReference type="CDD" id="cd07989">
    <property type="entry name" value="LPLAT_AGPAT-like"/>
    <property type="match status" value="1"/>
</dbReference>
<dbReference type="FunFam" id="3.30.300.30:FF:000009">
    <property type="entry name" value="Bifunctional protein Aas"/>
    <property type="match status" value="1"/>
</dbReference>
<dbReference type="FunFam" id="3.40.50.12780:FF:000009">
    <property type="entry name" value="Bifunctional protein Aas"/>
    <property type="match status" value="1"/>
</dbReference>
<dbReference type="Gene3D" id="3.30.300.30">
    <property type="match status" value="1"/>
</dbReference>
<dbReference type="Gene3D" id="3.40.50.12780">
    <property type="entry name" value="N-terminal domain of ligase-like"/>
    <property type="match status" value="1"/>
</dbReference>
<dbReference type="HAMAP" id="MF_01162">
    <property type="entry name" value="Aas"/>
    <property type="match status" value="1"/>
</dbReference>
<dbReference type="InterPro" id="IPR023775">
    <property type="entry name" value="Aas"/>
</dbReference>
<dbReference type="InterPro" id="IPR045851">
    <property type="entry name" value="AMP-bd_C_sf"/>
</dbReference>
<dbReference type="InterPro" id="IPR020845">
    <property type="entry name" value="AMP-binding_CS"/>
</dbReference>
<dbReference type="InterPro" id="IPR000873">
    <property type="entry name" value="AMP-dep_synth/lig_dom"/>
</dbReference>
<dbReference type="InterPro" id="IPR042099">
    <property type="entry name" value="ANL_N_sf"/>
</dbReference>
<dbReference type="InterPro" id="IPR002123">
    <property type="entry name" value="Plipid/glycerol_acylTrfase"/>
</dbReference>
<dbReference type="NCBIfam" id="NF005959">
    <property type="entry name" value="PRK08043.1"/>
    <property type="match status" value="1"/>
</dbReference>
<dbReference type="PANTHER" id="PTHR43201">
    <property type="entry name" value="ACYL-COA SYNTHETASE"/>
    <property type="match status" value="1"/>
</dbReference>
<dbReference type="PANTHER" id="PTHR43201:SF8">
    <property type="entry name" value="ACYL-COA SYNTHETASE FAMILY MEMBER 3"/>
    <property type="match status" value="1"/>
</dbReference>
<dbReference type="Pfam" id="PF01553">
    <property type="entry name" value="Acyltransferase"/>
    <property type="match status" value="1"/>
</dbReference>
<dbReference type="Pfam" id="PF00501">
    <property type="entry name" value="AMP-binding"/>
    <property type="match status" value="1"/>
</dbReference>
<dbReference type="SMART" id="SM00563">
    <property type="entry name" value="PlsC"/>
    <property type="match status" value="1"/>
</dbReference>
<dbReference type="SUPFAM" id="SSF56801">
    <property type="entry name" value="Acetyl-CoA synthetase-like"/>
    <property type="match status" value="1"/>
</dbReference>
<dbReference type="SUPFAM" id="SSF69593">
    <property type="entry name" value="Glycerol-3-phosphate (1)-acyltransferase"/>
    <property type="match status" value="1"/>
</dbReference>
<dbReference type="PROSITE" id="PS00455">
    <property type="entry name" value="AMP_BINDING"/>
    <property type="match status" value="1"/>
</dbReference>
<comment type="function">
    <text evidence="1">Plays a role in lysophospholipid acylation. Transfers fatty acids to the 1-position via an enzyme-bound acyl-ACP intermediate in the presence of ATP and magnesium. Its physiological function is to regenerate phosphatidylethanolamine from 2-acyl-glycero-3-phosphoethanolamine (2-acyl-GPE) formed by transacylation reactions or degradation by phospholipase A1.</text>
</comment>
<comment type="catalytic activity">
    <reaction evidence="1">
        <text>a 2-acyl-sn-glycero-3-phosphoethanolamine + a fatty acyl-[ACP] = a 1,2-diacyl-sn-glycero-3-phosphoethanolamine + holo-[ACP]</text>
        <dbReference type="Rhea" id="RHEA:10304"/>
        <dbReference type="Rhea" id="RHEA-COMP:9685"/>
        <dbReference type="Rhea" id="RHEA-COMP:14125"/>
        <dbReference type="ChEBI" id="CHEBI:64479"/>
        <dbReference type="ChEBI" id="CHEBI:64612"/>
        <dbReference type="ChEBI" id="CHEBI:65213"/>
        <dbReference type="ChEBI" id="CHEBI:138651"/>
        <dbReference type="EC" id="2.3.1.40"/>
    </reaction>
</comment>
<comment type="catalytic activity">
    <reaction evidence="1">
        <text>a long-chain fatty acid + holo-[ACP] + ATP = a long-chain fatty acyl-[ACP] + AMP + diphosphate</text>
        <dbReference type="Rhea" id="RHEA:45588"/>
        <dbReference type="Rhea" id="RHEA-COMP:9685"/>
        <dbReference type="Rhea" id="RHEA-COMP:12682"/>
        <dbReference type="ChEBI" id="CHEBI:30616"/>
        <dbReference type="ChEBI" id="CHEBI:33019"/>
        <dbReference type="ChEBI" id="CHEBI:57560"/>
        <dbReference type="ChEBI" id="CHEBI:64479"/>
        <dbReference type="ChEBI" id="CHEBI:133243"/>
        <dbReference type="ChEBI" id="CHEBI:456215"/>
        <dbReference type="EC" id="6.2.1.20"/>
    </reaction>
</comment>
<comment type="subcellular location">
    <subcellularLocation>
        <location evidence="1">Cell inner membrane</location>
        <topology evidence="1">Multi-pass membrane protein</topology>
    </subcellularLocation>
</comment>
<comment type="similarity">
    <text evidence="1">In the N-terminal section; belongs to the 2-acyl-GPE acetyltransferase family.</text>
</comment>
<comment type="similarity">
    <text evidence="1">In the C-terminal section; belongs to the ATP-dependent AMP-binding enzyme family.</text>
</comment>